<comment type="function">
    <text>Apoprotein for the two 4Fe-4S centers FA and FB of photosystem I (PSI); essential for photochemical activity. FB is the terminal electron acceptor of PSI, donating electrons to ferredoxin. The C-terminus interacts with PsaA/B/D and helps assemble the protein into the PSI complex. Required for binding of PsaD and PsaE to PSI. PSI is a plastocyanin/cytochrome c6-ferredoxin oxidoreductase, converting photonic excitation into a charge separation, which transfers an electron from the donor P700 chlorophyll pair to the spectroscopically characterized acceptors A0, A1, FX, FA and FB in turn.</text>
</comment>
<comment type="catalytic activity">
    <reaction evidence="2">
        <text>reduced [plastocyanin] + hnu + oxidized [2Fe-2S]-[ferredoxin] = oxidized [plastocyanin] + reduced [2Fe-2S]-[ferredoxin]</text>
        <dbReference type="Rhea" id="RHEA:30407"/>
        <dbReference type="Rhea" id="RHEA-COMP:10000"/>
        <dbReference type="Rhea" id="RHEA-COMP:10001"/>
        <dbReference type="Rhea" id="RHEA-COMP:10039"/>
        <dbReference type="Rhea" id="RHEA-COMP:10040"/>
        <dbReference type="ChEBI" id="CHEBI:29036"/>
        <dbReference type="ChEBI" id="CHEBI:30212"/>
        <dbReference type="ChEBI" id="CHEBI:33737"/>
        <dbReference type="ChEBI" id="CHEBI:33738"/>
        <dbReference type="ChEBI" id="CHEBI:49552"/>
        <dbReference type="EC" id="1.97.1.12"/>
    </reaction>
</comment>
<comment type="cofactor">
    <cofactor evidence="2">
        <name>[4Fe-4S] cluster</name>
        <dbReference type="ChEBI" id="CHEBI:49883"/>
    </cofactor>
    <text evidence="2">Binds 2 [4Fe-4S] clusters. Cluster 2 is most probably the spectroscopically characterized electron acceptor FA and cluster 1 is most probably FB.</text>
</comment>
<comment type="subunit">
    <text evidence="2">The eukaryotic PSI reaction center is composed of at least 11 subunits.</text>
</comment>
<comment type="subcellular location">
    <subcellularLocation>
        <location evidence="2">Plastid</location>
        <location evidence="2">Chloroplast thylakoid membrane</location>
        <topology evidence="2">Peripheral membrane protein</topology>
        <orientation evidence="2">Stromal side</orientation>
    </subcellularLocation>
</comment>
<evidence type="ECO:0000250" key="1"/>
<evidence type="ECO:0000255" key="2">
    <source>
        <dbReference type="HAMAP-Rule" id="MF_01303"/>
    </source>
</evidence>
<protein>
    <recommendedName>
        <fullName evidence="2">Photosystem I iron-sulfur center</fullName>
        <ecNumber evidence="2">1.97.1.12</ecNumber>
    </recommendedName>
    <alternativeName>
        <fullName evidence="2">9 kDa polypeptide</fullName>
    </alternativeName>
    <alternativeName>
        <fullName evidence="2">PSI-C</fullName>
    </alternativeName>
    <alternativeName>
        <fullName evidence="2">Photosystem I subunit VII</fullName>
    </alternativeName>
    <alternativeName>
        <fullName evidence="2">PsaC</fullName>
    </alternativeName>
</protein>
<dbReference type="EC" id="1.97.1.12" evidence="2"/>
<dbReference type="EMBL" id="EF067920">
    <property type="protein sequence ID" value="ABK20710.1"/>
    <property type="molecule type" value="Genomic_DNA"/>
</dbReference>
<dbReference type="RefSeq" id="YP_874487.1">
    <property type="nucleotide sequence ID" value="NC_008588.1"/>
</dbReference>
<dbReference type="SMR" id="A0T0L2"/>
<dbReference type="STRING" id="556484.A0T0L2"/>
<dbReference type="GeneID" id="4524701"/>
<dbReference type="InParanoid" id="A0T0L2"/>
<dbReference type="Proteomes" id="UP000000759">
    <property type="component" value="Chloroplast"/>
</dbReference>
<dbReference type="GO" id="GO:0009535">
    <property type="term" value="C:chloroplast thylakoid membrane"/>
    <property type="evidence" value="ECO:0007669"/>
    <property type="project" value="UniProtKB-SubCell"/>
</dbReference>
<dbReference type="GO" id="GO:0009522">
    <property type="term" value="C:photosystem I"/>
    <property type="evidence" value="ECO:0007669"/>
    <property type="project" value="UniProtKB-KW"/>
</dbReference>
<dbReference type="GO" id="GO:0051539">
    <property type="term" value="F:4 iron, 4 sulfur cluster binding"/>
    <property type="evidence" value="ECO:0007669"/>
    <property type="project" value="UniProtKB-KW"/>
</dbReference>
<dbReference type="GO" id="GO:0009055">
    <property type="term" value="F:electron transfer activity"/>
    <property type="evidence" value="ECO:0007669"/>
    <property type="project" value="UniProtKB-UniRule"/>
</dbReference>
<dbReference type="GO" id="GO:0046872">
    <property type="term" value="F:metal ion binding"/>
    <property type="evidence" value="ECO:0007669"/>
    <property type="project" value="UniProtKB-KW"/>
</dbReference>
<dbReference type="GO" id="GO:0016491">
    <property type="term" value="F:oxidoreductase activity"/>
    <property type="evidence" value="ECO:0007669"/>
    <property type="project" value="UniProtKB-KW"/>
</dbReference>
<dbReference type="GO" id="GO:0009773">
    <property type="term" value="P:photosynthetic electron transport in photosystem I"/>
    <property type="evidence" value="ECO:0007669"/>
    <property type="project" value="InterPro"/>
</dbReference>
<dbReference type="FunFam" id="3.30.70.20:FF:000001">
    <property type="entry name" value="Photosystem I iron-sulfur center"/>
    <property type="match status" value="1"/>
</dbReference>
<dbReference type="Gene3D" id="3.30.70.20">
    <property type="match status" value="1"/>
</dbReference>
<dbReference type="HAMAP" id="MF_01303">
    <property type="entry name" value="PSI_PsaC"/>
    <property type="match status" value="1"/>
</dbReference>
<dbReference type="InterPro" id="IPR017896">
    <property type="entry name" value="4Fe4S_Fe-S-bd"/>
</dbReference>
<dbReference type="InterPro" id="IPR017900">
    <property type="entry name" value="4Fe4S_Fe_S_CS"/>
</dbReference>
<dbReference type="InterPro" id="IPR050157">
    <property type="entry name" value="PSI_iron-sulfur_center"/>
</dbReference>
<dbReference type="InterPro" id="IPR017491">
    <property type="entry name" value="PSI_PsaC"/>
</dbReference>
<dbReference type="NCBIfam" id="TIGR03048">
    <property type="entry name" value="PS_I_psaC"/>
    <property type="match status" value="1"/>
</dbReference>
<dbReference type="PANTHER" id="PTHR24960:SF79">
    <property type="entry name" value="PHOTOSYSTEM I IRON-SULFUR CENTER"/>
    <property type="match status" value="1"/>
</dbReference>
<dbReference type="PANTHER" id="PTHR24960">
    <property type="entry name" value="PHOTOSYSTEM I IRON-SULFUR CENTER-RELATED"/>
    <property type="match status" value="1"/>
</dbReference>
<dbReference type="Pfam" id="PF12838">
    <property type="entry name" value="Fer4_7"/>
    <property type="match status" value="1"/>
</dbReference>
<dbReference type="SUPFAM" id="SSF54862">
    <property type="entry name" value="4Fe-4S ferredoxins"/>
    <property type="match status" value="1"/>
</dbReference>
<dbReference type="PROSITE" id="PS00198">
    <property type="entry name" value="4FE4S_FER_1"/>
    <property type="match status" value="2"/>
</dbReference>
<dbReference type="PROSITE" id="PS51379">
    <property type="entry name" value="4FE4S_FER_2"/>
    <property type="match status" value="2"/>
</dbReference>
<accession>A0T0L2</accession>
<gene>
    <name evidence="2" type="primary">psaC</name>
</gene>
<organism>
    <name type="scientific">Phaeodactylum tricornutum (strain CCAP 1055/1)</name>
    <dbReference type="NCBI Taxonomy" id="556484"/>
    <lineage>
        <taxon>Eukaryota</taxon>
        <taxon>Sar</taxon>
        <taxon>Stramenopiles</taxon>
        <taxon>Ochrophyta</taxon>
        <taxon>Bacillariophyta</taxon>
        <taxon>Bacillariophyceae</taxon>
        <taxon>Bacillariophycidae</taxon>
        <taxon>Naviculales</taxon>
        <taxon>Phaeodactylaceae</taxon>
        <taxon>Phaeodactylum</taxon>
    </lineage>
</organism>
<reference key="1">
    <citation type="journal article" date="2007" name="Mol. Genet. Genomics">
        <title>Chloroplast genomes of the diatoms Phaeodactylum tricornutum and Thalassiosira pseudonana: comparison with other plastid genomes of the red lineage.</title>
        <authorList>
            <person name="Oudot-Le Secq M.-P."/>
            <person name="Grimwood J."/>
            <person name="Shapiro H."/>
            <person name="Armbrust E.V."/>
            <person name="Bowler C."/>
            <person name="Green B.R."/>
        </authorList>
    </citation>
    <scope>NUCLEOTIDE SEQUENCE [LARGE SCALE GENOMIC DNA]</scope>
    <source>
        <strain>CCAP 1055/1</strain>
    </source>
</reference>
<sequence>MSHTVKIYDTCIGCTQCVRACPTDVLEMVPWDGCKAGQIASSPRVEDCVGCKRCETACPTDFLSVRVYLGAETTRSLGLAY</sequence>
<geneLocation type="chloroplast"/>
<keyword id="KW-0004">4Fe-4S</keyword>
<keyword id="KW-0150">Chloroplast</keyword>
<keyword id="KW-0249">Electron transport</keyword>
<keyword id="KW-0408">Iron</keyword>
<keyword id="KW-0411">Iron-sulfur</keyword>
<keyword id="KW-0472">Membrane</keyword>
<keyword id="KW-0479">Metal-binding</keyword>
<keyword id="KW-0560">Oxidoreductase</keyword>
<keyword id="KW-0602">Photosynthesis</keyword>
<keyword id="KW-0603">Photosystem I</keyword>
<keyword id="KW-0934">Plastid</keyword>
<keyword id="KW-1185">Reference proteome</keyword>
<keyword id="KW-0677">Repeat</keyword>
<keyword id="KW-0793">Thylakoid</keyword>
<keyword id="KW-0813">Transport</keyword>
<proteinExistence type="inferred from homology"/>
<feature type="initiator methionine" description="Removed" evidence="1">
    <location>
        <position position="1"/>
    </location>
</feature>
<feature type="chain" id="PRO_0000276009" description="Photosystem I iron-sulfur center">
    <location>
        <begin position="2"/>
        <end position="81"/>
    </location>
</feature>
<feature type="domain" description="4Fe-4S ferredoxin-type 1" evidence="2">
    <location>
        <begin position="2"/>
        <end position="31"/>
    </location>
</feature>
<feature type="domain" description="4Fe-4S ferredoxin-type 2" evidence="2">
    <location>
        <begin position="37"/>
        <end position="68"/>
    </location>
</feature>
<feature type="binding site" evidence="2">
    <location>
        <position position="11"/>
    </location>
    <ligand>
        <name>[4Fe-4S] cluster</name>
        <dbReference type="ChEBI" id="CHEBI:49883"/>
        <label>1</label>
    </ligand>
</feature>
<feature type="binding site" evidence="2">
    <location>
        <position position="14"/>
    </location>
    <ligand>
        <name>[4Fe-4S] cluster</name>
        <dbReference type="ChEBI" id="CHEBI:49883"/>
        <label>1</label>
    </ligand>
</feature>
<feature type="binding site" evidence="2">
    <location>
        <position position="17"/>
    </location>
    <ligand>
        <name>[4Fe-4S] cluster</name>
        <dbReference type="ChEBI" id="CHEBI:49883"/>
        <label>1</label>
    </ligand>
</feature>
<feature type="binding site" evidence="2">
    <location>
        <position position="21"/>
    </location>
    <ligand>
        <name>[4Fe-4S] cluster</name>
        <dbReference type="ChEBI" id="CHEBI:49883"/>
        <label>2</label>
    </ligand>
</feature>
<feature type="binding site" evidence="2">
    <location>
        <position position="48"/>
    </location>
    <ligand>
        <name>[4Fe-4S] cluster</name>
        <dbReference type="ChEBI" id="CHEBI:49883"/>
        <label>2</label>
    </ligand>
</feature>
<feature type="binding site" evidence="2">
    <location>
        <position position="51"/>
    </location>
    <ligand>
        <name>[4Fe-4S] cluster</name>
        <dbReference type="ChEBI" id="CHEBI:49883"/>
        <label>2</label>
    </ligand>
</feature>
<feature type="binding site" evidence="2">
    <location>
        <position position="54"/>
    </location>
    <ligand>
        <name>[4Fe-4S] cluster</name>
        <dbReference type="ChEBI" id="CHEBI:49883"/>
        <label>2</label>
    </ligand>
</feature>
<feature type="binding site" evidence="2">
    <location>
        <position position="58"/>
    </location>
    <ligand>
        <name>[4Fe-4S] cluster</name>
        <dbReference type="ChEBI" id="CHEBI:49883"/>
        <label>1</label>
    </ligand>
</feature>
<name>PSAC_PHATC</name>